<reference key="1">
    <citation type="journal article" date="2010" name="PLoS ONE">
        <title>The complete genome sequence of Cupriavidus metallidurans strain CH34, a master survivalist in harsh and anthropogenic environments.</title>
        <authorList>
            <person name="Janssen P.J."/>
            <person name="Van Houdt R."/>
            <person name="Moors H."/>
            <person name="Monsieurs P."/>
            <person name="Morin N."/>
            <person name="Michaux A."/>
            <person name="Benotmane M.A."/>
            <person name="Leys N."/>
            <person name="Vallaeys T."/>
            <person name="Lapidus A."/>
            <person name="Monchy S."/>
            <person name="Medigue C."/>
            <person name="Taghavi S."/>
            <person name="McCorkle S."/>
            <person name="Dunn J."/>
            <person name="van der Lelie D."/>
            <person name="Mergeay M."/>
        </authorList>
    </citation>
    <scope>NUCLEOTIDE SEQUENCE [LARGE SCALE GENOMIC DNA]</scope>
    <source>
        <strain>ATCC 43123 / DSM 2839 / NBRC 102507 / CH34</strain>
    </source>
</reference>
<gene>
    <name evidence="1" type="primary">tmk</name>
    <name type="ordered locus">Rmet_1828</name>
</gene>
<accession>Q1LMB9</accession>
<organism>
    <name type="scientific">Cupriavidus metallidurans (strain ATCC 43123 / DSM 2839 / NBRC 102507 / CH34)</name>
    <name type="common">Ralstonia metallidurans</name>
    <dbReference type="NCBI Taxonomy" id="266264"/>
    <lineage>
        <taxon>Bacteria</taxon>
        <taxon>Pseudomonadati</taxon>
        <taxon>Pseudomonadota</taxon>
        <taxon>Betaproteobacteria</taxon>
        <taxon>Burkholderiales</taxon>
        <taxon>Burkholderiaceae</taxon>
        <taxon>Cupriavidus</taxon>
    </lineage>
</organism>
<sequence>MRGKFITFEGIDGAGKSTHIEWVAERLRARANVVTTREPGGTPLGEDLRQLLLHRKMHLETEALLMFAARREHIAEVIEPALARGDWVISDRFTDATFAYQGGGRGLALDRLATLEQWVQSGLQPDLTLLFDVPLETASARLAGAREPDKFEAESRAFFERTRTEYLRRAAEAPQRFRVIDATRSIDEIRVALEEIIATL</sequence>
<name>KTHY_CUPMC</name>
<protein>
    <recommendedName>
        <fullName evidence="1">Thymidylate kinase</fullName>
        <ecNumber evidence="1">2.7.4.9</ecNumber>
    </recommendedName>
    <alternativeName>
        <fullName evidence="1">dTMP kinase</fullName>
    </alternativeName>
</protein>
<evidence type="ECO:0000255" key="1">
    <source>
        <dbReference type="HAMAP-Rule" id="MF_00165"/>
    </source>
</evidence>
<comment type="function">
    <text evidence="1">Phosphorylation of dTMP to form dTDP in both de novo and salvage pathways of dTTP synthesis.</text>
</comment>
<comment type="catalytic activity">
    <reaction evidence="1">
        <text>dTMP + ATP = dTDP + ADP</text>
        <dbReference type="Rhea" id="RHEA:13517"/>
        <dbReference type="ChEBI" id="CHEBI:30616"/>
        <dbReference type="ChEBI" id="CHEBI:58369"/>
        <dbReference type="ChEBI" id="CHEBI:63528"/>
        <dbReference type="ChEBI" id="CHEBI:456216"/>
        <dbReference type="EC" id="2.7.4.9"/>
    </reaction>
</comment>
<comment type="similarity">
    <text evidence="1">Belongs to the thymidylate kinase family.</text>
</comment>
<keyword id="KW-0067">ATP-binding</keyword>
<keyword id="KW-0418">Kinase</keyword>
<keyword id="KW-0545">Nucleotide biosynthesis</keyword>
<keyword id="KW-0547">Nucleotide-binding</keyword>
<keyword id="KW-1185">Reference proteome</keyword>
<keyword id="KW-0808">Transferase</keyword>
<proteinExistence type="inferred from homology"/>
<dbReference type="EC" id="2.7.4.9" evidence="1"/>
<dbReference type="EMBL" id="CP000352">
    <property type="protein sequence ID" value="ABF08707.1"/>
    <property type="molecule type" value="Genomic_DNA"/>
</dbReference>
<dbReference type="RefSeq" id="WP_011516557.1">
    <property type="nucleotide sequence ID" value="NC_007973.1"/>
</dbReference>
<dbReference type="SMR" id="Q1LMB9"/>
<dbReference type="STRING" id="266264.Rmet_1828"/>
<dbReference type="KEGG" id="rme:Rmet_1828"/>
<dbReference type="eggNOG" id="COG0125">
    <property type="taxonomic scope" value="Bacteria"/>
</dbReference>
<dbReference type="HOGENOM" id="CLU_049131_0_2_4"/>
<dbReference type="Proteomes" id="UP000002429">
    <property type="component" value="Chromosome"/>
</dbReference>
<dbReference type="GO" id="GO:0005829">
    <property type="term" value="C:cytosol"/>
    <property type="evidence" value="ECO:0007669"/>
    <property type="project" value="TreeGrafter"/>
</dbReference>
<dbReference type="GO" id="GO:0005524">
    <property type="term" value="F:ATP binding"/>
    <property type="evidence" value="ECO:0007669"/>
    <property type="project" value="UniProtKB-UniRule"/>
</dbReference>
<dbReference type="GO" id="GO:0004798">
    <property type="term" value="F:dTMP kinase activity"/>
    <property type="evidence" value="ECO:0007669"/>
    <property type="project" value="UniProtKB-UniRule"/>
</dbReference>
<dbReference type="GO" id="GO:0006233">
    <property type="term" value="P:dTDP biosynthetic process"/>
    <property type="evidence" value="ECO:0007669"/>
    <property type="project" value="InterPro"/>
</dbReference>
<dbReference type="GO" id="GO:0006235">
    <property type="term" value="P:dTTP biosynthetic process"/>
    <property type="evidence" value="ECO:0007669"/>
    <property type="project" value="UniProtKB-UniRule"/>
</dbReference>
<dbReference type="GO" id="GO:0006227">
    <property type="term" value="P:dUDP biosynthetic process"/>
    <property type="evidence" value="ECO:0007669"/>
    <property type="project" value="TreeGrafter"/>
</dbReference>
<dbReference type="CDD" id="cd01672">
    <property type="entry name" value="TMPK"/>
    <property type="match status" value="1"/>
</dbReference>
<dbReference type="FunFam" id="3.40.50.300:FF:000225">
    <property type="entry name" value="Thymidylate kinase"/>
    <property type="match status" value="1"/>
</dbReference>
<dbReference type="Gene3D" id="3.40.50.300">
    <property type="entry name" value="P-loop containing nucleotide triphosphate hydrolases"/>
    <property type="match status" value="1"/>
</dbReference>
<dbReference type="HAMAP" id="MF_00165">
    <property type="entry name" value="Thymidylate_kinase"/>
    <property type="match status" value="1"/>
</dbReference>
<dbReference type="InterPro" id="IPR027417">
    <property type="entry name" value="P-loop_NTPase"/>
</dbReference>
<dbReference type="InterPro" id="IPR039430">
    <property type="entry name" value="Thymidylate_kin-like_dom"/>
</dbReference>
<dbReference type="InterPro" id="IPR018094">
    <property type="entry name" value="Thymidylate_kinase"/>
</dbReference>
<dbReference type="NCBIfam" id="TIGR00041">
    <property type="entry name" value="DTMP_kinase"/>
    <property type="match status" value="1"/>
</dbReference>
<dbReference type="PANTHER" id="PTHR10344">
    <property type="entry name" value="THYMIDYLATE KINASE"/>
    <property type="match status" value="1"/>
</dbReference>
<dbReference type="PANTHER" id="PTHR10344:SF4">
    <property type="entry name" value="UMP-CMP KINASE 2, MITOCHONDRIAL"/>
    <property type="match status" value="1"/>
</dbReference>
<dbReference type="Pfam" id="PF02223">
    <property type="entry name" value="Thymidylate_kin"/>
    <property type="match status" value="1"/>
</dbReference>
<dbReference type="SUPFAM" id="SSF52540">
    <property type="entry name" value="P-loop containing nucleoside triphosphate hydrolases"/>
    <property type="match status" value="1"/>
</dbReference>
<feature type="chain" id="PRO_1000123585" description="Thymidylate kinase">
    <location>
        <begin position="1"/>
        <end position="200"/>
    </location>
</feature>
<feature type="binding site" evidence="1">
    <location>
        <begin position="10"/>
        <end position="17"/>
    </location>
    <ligand>
        <name>ATP</name>
        <dbReference type="ChEBI" id="CHEBI:30616"/>
    </ligand>
</feature>